<gene>
    <name evidence="1" type="primary">mnmC</name>
    <name type="ordered locus">CGSHiEE_05250</name>
</gene>
<proteinExistence type="inferred from homology"/>
<evidence type="ECO:0000255" key="1">
    <source>
        <dbReference type="HAMAP-Rule" id="MF_01102"/>
    </source>
</evidence>
<keyword id="KW-0963">Cytoplasm</keyword>
<keyword id="KW-0274">FAD</keyword>
<keyword id="KW-0285">Flavoprotein</keyword>
<keyword id="KW-0489">Methyltransferase</keyword>
<keyword id="KW-0511">Multifunctional enzyme</keyword>
<keyword id="KW-0560">Oxidoreductase</keyword>
<keyword id="KW-0949">S-adenosyl-L-methionine</keyword>
<keyword id="KW-0808">Transferase</keyword>
<keyword id="KW-0819">tRNA processing</keyword>
<accession>A5UCC9</accession>
<dbReference type="EC" id="2.1.1.61" evidence="1"/>
<dbReference type="EC" id="1.5.-.-" evidence="1"/>
<dbReference type="EMBL" id="CP000671">
    <property type="protein sequence ID" value="ABQ98430.1"/>
    <property type="molecule type" value="Genomic_DNA"/>
</dbReference>
<dbReference type="SMR" id="A5UCC9"/>
<dbReference type="KEGG" id="hip:CGSHiEE_05250"/>
<dbReference type="HOGENOM" id="CLU_022427_2_1_6"/>
<dbReference type="GO" id="GO:0005737">
    <property type="term" value="C:cytoplasm"/>
    <property type="evidence" value="ECO:0007669"/>
    <property type="project" value="UniProtKB-SubCell"/>
</dbReference>
<dbReference type="GO" id="GO:0050660">
    <property type="term" value="F:flavin adenine dinucleotide binding"/>
    <property type="evidence" value="ECO:0007669"/>
    <property type="project" value="UniProtKB-UniRule"/>
</dbReference>
<dbReference type="GO" id="GO:0016645">
    <property type="term" value="F:oxidoreductase activity, acting on the CH-NH group of donors"/>
    <property type="evidence" value="ECO:0007669"/>
    <property type="project" value="InterPro"/>
</dbReference>
<dbReference type="GO" id="GO:0004808">
    <property type="term" value="F:tRNA (5-methylaminomethyl-2-thiouridylate)(34)-methyltransferase activity"/>
    <property type="evidence" value="ECO:0007669"/>
    <property type="project" value="UniProtKB-EC"/>
</dbReference>
<dbReference type="GO" id="GO:0032259">
    <property type="term" value="P:methylation"/>
    <property type="evidence" value="ECO:0007669"/>
    <property type="project" value="UniProtKB-KW"/>
</dbReference>
<dbReference type="GO" id="GO:0002098">
    <property type="term" value="P:tRNA wobble uridine modification"/>
    <property type="evidence" value="ECO:0007669"/>
    <property type="project" value="TreeGrafter"/>
</dbReference>
<dbReference type="FunFam" id="3.40.50.150:FF:000107">
    <property type="entry name" value="tRNA 5-methylaminomethyl-2-thiouridine biosynthesis bifunctional protein MnmC"/>
    <property type="match status" value="1"/>
</dbReference>
<dbReference type="Gene3D" id="3.30.9.10">
    <property type="entry name" value="D-Amino Acid Oxidase, subunit A, domain 2"/>
    <property type="match status" value="1"/>
</dbReference>
<dbReference type="Gene3D" id="3.50.50.60">
    <property type="entry name" value="FAD/NAD(P)-binding domain"/>
    <property type="match status" value="1"/>
</dbReference>
<dbReference type="Gene3D" id="3.40.50.150">
    <property type="entry name" value="Vaccinia Virus protein VP39"/>
    <property type="match status" value="1"/>
</dbReference>
<dbReference type="HAMAP" id="MF_01102">
    <property type="entry name" value="MnmC"/>
    <property type="match status" value="1"/>
</dbReference>
<dbReference type="InterPro" id="IPR006076">
    <property type="entry name" value="FAD-dep_OxRdtase"/>
</dbReference>
<dbReference type="InterPro" id="IPR036188">
    <property type="entry name" value="FAD/NAD-bd_sf"/>
</dbReference>
<dbReference type="InterPro" id="IPR008471">
    <property type="entry name" value="MnmC-like_methylTransf"/>
</dbReference>
<dbReference type="InterPro" id="IPR029063">
    <property type="entry name" value="SAM-dependent_MTases_sf"/>
</dbReference>
<dbReference type="InterPro" id="IPR023032">
    <property type="entry name" value="tRNA_MAMT_biosynth_bifunc_MnmC"/>
</dbReference>
<dbReference type="InterPro" id="IPR047785">
    <property type="entry name" value="tRNA_MNMC2"/>
</dbReference>
<dbReference type="InterPro" id="IPR017610">
    <property type="entry name" value="tRNA_S-uridine_synth_MnmC_C"/>
</dbReference>
<dbReference type="NCBIfam" id="TIGR03197">
    <property type="entry name" value="MnmC_Cterm"/>
    <property type="match status" value="1"/>
</dbReference>
<dbReference type="NCBIfam" id="NF002481">
    <property type="entry name" value="PRK01747.1-2"/>
    <property type="match status" value="1"/>
</dbReference>
<dbReference type="NCBIfam" id="NF002484">
    <property type="entry name" value="PRK01747.1-5"/>
    <property type="match status" value="1"/>
</dbReference>
<dbReference type="NCBIfam" id="NF033855">
    <property type="entry name" value="tRNA_MNMC2"/>
    <property type="match status" value="1"/>
</dbReference>
<dbReference type="PANTHER" id="PTHR13847">
    <property type="entry name" value="SARCOSINE DEHYDROGENASE-RELATED"/>
    <property type="match status" value="1"/>
</dbReference>
<dbReference type="PANTHER" id="PTHR13847:SF283">
    <property type="entry name" value="TRNA 5-METHYLAMINOMETHYL-2-THIOURIDINE BIOSYNTHESIS BIFUNCTIONAL PROTEIN MNMC"/>
    <property type="match status" value="1"/>
</dbReference>
<dbReference type="Pfam" id="PF01266">
    <property type="entry name" value="DAO"/>
    <property type="match status" value="1"/>
</dbReference>
<dbReference type="Pfam" id="PF05430">
    <property type="entry name" value="Methyltransf_30"/>
    <property type="match status" value="1"/>
</dbReference>
<dbReference type="SUPFAM" id="SSF51905">
    <property type="entry name" value="FAD/NAD(P)-binding domain"/>
    <property type="match status" value="1"/>
</dbReference>
<reference key="1">
    <citation type="journal article" date="2007" name="Genome Biol.">
        <title>Characterization and modeling of the Haemophilus influenzae core and supragenomes based on the complete genomic sequences of Rd and 12 clinical nontypeable strains.</title>
        <authorList>
            <person name="Hogg J.S."/>
            <person name="Hu F.Z."/>
            <person name="Janto B."/>
            <person name="Boissy R."/>
            <person name="Hayes J."/>
            <person name="Keefe R."/>
            <person name="Post J.C."/>
            <person name="Ehrlich G.D."/>
        </authorList>
    </citation>
    <scope>NUCLEOTIDE SEQUENCE [LARGE SCALE GENOMIC DNA]</scope>
    <source>
        <strain>PittEE</strain>
    </source>
</reference>
<feature type="chain" id="PRO_1000064997" description="tRNA 5-methylaminomethyl-2-thiouridine biosynthesis bifunctional protein MnmC">
    <location>
        <begin position="1"/>
        <end position="670"/>
    </location>
</feature>
<feature type="region of interest" description="tRNA (mnm(5)s(2)U34)-methyltransferase">
    <location>
        <begin position="1"/>
        <end position="242"/>
    </location>
</feature>
<feature type="region of interest" description="FAD-dependent cmnm(5)s(2)U34 oxidoreductase">
    <location>
        <begin position="269"/>
        <end position="670"/>
    </location>
</feature>
<protein>
    <recommendedName>
        <fullName evidence="1">tRNA 5-methylaminomethyl-2-thiouridine biosynthesis bifunctional protein MnmC</fullName>
        <shortName evidence="1">tRNA mnm(5)s(2)U biosynthesis bifunctional protein</shortName>
    </recommendedName>
    <domain>
        <recommendedName>
            <fullName evidence="1">tRNA (mnm(5)s(2)U34)-methyltransferase</fullName>
            <ecNumber evidence="1">2.1.1.61</ecNumber>
        </recommendedName>
    </domain>
    <domain>
        <recommendedName>
            <fullName evidence="1">FAD-dependent cmnm(5)s(2)U34 oxidoreductase</fullName>
            <ecNumber evidence="1">1.5.-.-</ecNumber>
        </recommendedName>
    </domain>
</protein>
<sequence>MTFSVQHAEIHFNQNHIPVSDQFDDVYFSNENGLAETDYVFLQGNQLWERWITHKEANFVIAETGFGTGLNFFAVTKLFREFRQQHENHPLKRLNFISFEKYPLKITALLQAHLAYPQFEDLSAHLQRYWPSLILGCHRIHFGETTLDLWLGDVSENLPQLGDYMNERIDAWFLDGFAPSKNPEMWNDDLYNLMFRFTKPNGSFATFTAASAVRKGLESAGFNVTKRKGFGKKRECLSGLKIQSKSTALSTPWYLAQPAKMEQQDVAIIGGGIASLCAAISLVKRGAKVTIYCEDDSLALNASGNKQGAFYPQLSDDNALTVDFYLHAFSYGRQLLDWAIAQNIAFEHEFCGVALCAYNKKSAVKLAKISQLGLPNEIFQMLNAEQLSEKVGLPLNCKGGWIEQGAWLAPRQFVQNAFSFLEKQGVIIKTSQKITALSQLEKGWELKNMQGQKYCHEVVILANGYKITDFVQTEKLPLYPIRGQVSQIPTSENLLKLKSVLCYDGYLTPANQLKTSHCIGASHVRDNVDRHFSEQEQQENQQKLQQNIAQPWTQDVNTSDNLARVGIRCSVRDLAPMVGNVPHFEQQQADYYNLFNLRRRKQPIQSAINFENLFLTAALGSRGLTSAPLLGETLASIIYGEPLPISEGILHNLSANRAWVKKWLKGSKVE</sequence>
<comment type="function">
    <text evidence="1">Catalyzes the last two steps in the biosynthesis of 5-methylaminomethyl-2-thiouridine (mnm(5)s(2)U) at the wobble position (U34) in tRNA. Catalyzes the FAD-dependent demodification of cmnm(5)s(2)U34 to nm(5)s(2)U34, followed by the transfer of a methyl group from S-adenosyl-L-methionine to nm(5)s(2)U34, to form mnm(5)s(2)U34.</text>
</comment>
<comment type="catalytic activity">
    <reaction evidence="1">
        <text>5-aminomethyl-2-thiouridine(34) in tRNA + S-adenosyl-L-methionine = 5-methylaminomethyl-2-thiouridine(34) in tRNA + S-adenosyl-L-homocysteine + H(+)</text>
        <dbReference type="Rhea" id="RHEA:19569"/>
        <dbReference type="Rhea" id="RHEA-COMP:10195"/>
        <dbReference type="Rhea" id="RHEA-COMP:10197"/>
        <dbReference type="ChEBI" id="CHEBI:15378"/>
        <dbReference type="ChEBI" id="CHEBI:57856"/>
        <dbReference type="ChEBI" id="CHEBI:59789"/>
        <dbReference type="ChEBI" id="CHEBI:74454"/>
        <dbReference type="ChEBI" id="CHEBI:74455"/>
        <dbReference type="EC" id="2.1.1.61"/>
    </reaction>
</comment>
<comment type="cofactor">
    <cofactor evidence="1">
        <name>FAD</name>
        <dbReference type="ChEBI" id="CHEBI:57692"/>
    </cofactor>
</comment>
<comment type="subcellular location">
    <subcellularLocation>
        <location evidence="1">Cytoplasm</location>
    </subcellularLocation>
</comment>
<comment type="similarity">
    <text evidence="1">In the N-terminal section; belongs to the methyltransferase superfamily. tRNA (mnm(5)s(2)U34)-methyltransferase family.</text>
</comment>
<comment type="similarity">
    <text evidence="1">In the C-terminal section; belongs to the DAO family.</text>
</comment>
<name>MNMC_HAEIE</name>
<organism>
    <name type="scientific">Haemophilus influenzae (strain PittEE)</name>
    <dbReference type="NCBI Taxonomy" id="374930"/>
    <lineage>
        <taxon>Bacteria</taxon>
        <taxon>Pseudomonadati</taxon>
        <taxon>Pseudomonadota</taxon>
        <taxon>Gammaproteobacteria</taxon>
        <taxon>Pasteurellales</taxon>
        <taxon>Pasteurellaceae</taxon>
        <taxon>Haemophilus</taxon>
    </lineage>
</organism>